<sequence>MKKIILMLLLFSIFFILKSESQNTLVLNALIYDNTPSRNPDFEASGSVGVQKNLVKSVLGSDGTPVYCCGNSPSATIHNQTTFQSWFHNVPGVNLPIQKDIILTQSLSNPNIYSYSNDSYFVIDGQGFDDKSVYPNERVYRDAFGNPHNFHFCLQAHTEFQYKTGDVFNFAGDDDVWVFINNILVVDLGGIHTIASASVNLDLLGLTPGQNYPFDFFYCERHTVESHIRIETSLAFKCPRYDECGVCEGDGTSCCTPNNCDNNPIYRTNCITAKCSNNVCVTSAPYCSSTEPCTVGLCTPGVGCSVVPKNCVNENHCTQDSCNSTINACQHDPIPDCINCAYIGCITTDYCNEQVCSADGRSCETRPKNCDDLNFCTVDTCSNGVCIYTRIDNCVNCTGPGIGCITTDQCNPNVCSPDGNSCIIQPKNCSDGNACNDPSCVSGGMCMLTPVNCDDGDDCTFDSCSSTVGCIHTNISNCVECQNIACITTDFCNVKICINNGTTCDTVPKTCDDGDSCTIDSCVSPSGACLYEPIANCVNCGGNQCITTDFCLPLICGPDGVTCAVEPKKCDDFNPCTFDSCISPQGDCGNAPIPGCVACNEILGCTTTDPCHPITCSAIGDQCVSTDKDCEDGNHCTINSCQNNNGTATCLNSLITHCTDCPGIGCTTTDFCFQQVCSATDGDVCTTVPLNCDDGLQCTVDSCIGPMGVCSHIAIAPKCLECALEPCITTDNCQPVICGPDGRCIQETIEDFCDDYNYCTVDTCTGVGCEHASISGCRNCTNGIGCTTPSDDACNLQVCSETGDSCLTMVLNCDDNNDCTEDKCLNTGICQNNPIDGCVTPSPVSIGGTIPPTTTGVSQVECDCCPIGQKCLLVNGHEICIKPATTGGIPELTTGCAGTTTGRATGHYTESGTGNPHLCDRYHCKRGMECHVVNGVPECLPSNYKCLDCLDLHCERQGDFTCFMVKNPNFISSKHSCYGESCCKFTPVCKPKGHSL</sequence>
<comment type="subcellular location">
    <subcellularLocation>
        <location evidence="3">Secreted</location>
    </subcellularLocation>
</comment>
<comment type="similarity">
    <text evidence="3">Belongs to the prespore-cell-inducing factor family.</text>
</comment>
<accession>Q54C31</accession>
<keyword id="KW-0325">Glycoprotein</keyword>
<keyword id="KW-1185">Reference proteome</keyword>
<keyword id="KW-0964">Secreted</keyword>
<keyword id="KW-0732">Signal</keyword>
<dbReference type="EMBL" id="AAFI02000200">
    <property type="protein sequence ID" value="EAL60842.1"/>
    <property type="molecule type" value="Genomic_DNA"/>
</dbReference>
<dbReference type="RefSeq" id="XP_629235.1">
    <property type="nucleotide sequence ID" value="XM_629233.1"/>
</dbReference>
<dbReference type="FunCoup" id="Q54C31">
    <property type="interactions" value="12"/>
</dbReference>
<dbReference type="GlyCosmos" id="Q54C31">
    <property type="glycosylation" value="9 sites, No reported glycans"/>
</dbReference>
<dbReference type="GlyGen" id="Q54C31">
    <property type="glycosylation" value="9 sites"/>
</dbReference>
<dbReference type="PaxDb" id="44689-DDB0231519"/>
<dbReference type="EnsemblProtists" id="EAL60842">
    <property type="protein sequence ID" value="EAL60842"/>
    <property type="gene ID" value="DDB_G0293286"/>
</dbReference>
<dbReference type="GeneID" id="8629117"/>
<dbReference type="KEGG" id="ddi:DDB_G0293286"/>
<dbReference type="dictyBase" id="DDB_G0293286">
    <property type="gene designation" value="psiR"/>
</dbReference>
<dbReference type="VEuPathDB" id="AmoebaDB:DDB_G0293286"/>
<dbReference type="eggNOG" id="ENOG502STKH">
    <property type="taxonomic scope" value="Eukaryota"/>
</dbReference>
<dbReference type="HOGENOM" id="CLU_302771_0_0_1"/>
<dbReference type="InParanoid" id="Q54C31"/>
<dbReference type="OMA" id="HASCENG"/>
<dbReference type="PhylomeDB" id="Q54C31"/>
<dbReference type="PRO" id="PR:Q54C31"/>
<dbReference type="Proteomes" id="UP000002195">
    <property type="component" value="Chromosome 6"/>
</dbReference>
<dbReference type="GO" id="GO:0005576">
    <property type="term" value="C:extracellular region"/>
    <property type="evidence" value="ECO:0000318"/>
    <property type="project" value="GO_Central"/>
</dbReference>
<dbReference type="InterPro" id="IPR011874">
    <property type="entry name" value="Fibro_Slime"/>
</dbReference>
<dbReference type="InterPro" id="IPR037524">
    <property type="entry name" value="PA14/GLEYA"/>
</dbReference>
<dbReference type="InterPro" id="IPR011658">
    <property type="entry name" value="PA14_dom"/>
</dbReference>
<dbReference type="InterPro" id="IPR051154">
    <property type="entry name" value="Prespore-cell_inducing_factor"/>
</dbReference>
<dbReference type="InterPro" id="IPR001673">
    <property type="entry name" value="S_mold_repeat"/>
</dbReference>
<dbReference type="NCBIfam" id="TIGR02148">
    <property type="entry name" value="Fibro_Slime"/>
    <property type="match status" value="1"/>
</dbReference>
<dbReference type="PANTHER" id="PTHR31137">
    <property type="entry name" value="PROTEIN PSIB-RELATED-RELATED"/>
    <property type="match status" value="1"/>
</dbReference>
<dbReference type="PANTHER" id="PTHR31137:SF5">
    <property type="entry name" value="PROTEIN PSIQ-RELATED"/>
    <property type="match status" value="1"/>
</dbReference>
<dbReference type="Pfam" id="PF00526">
    <property type="entry name" value="Dicty_CTDC"/>
    <property type="match status" value="8"/>
</dbReference>
<dbReference type="Pfam" id="PF07691">
    <property type="entry name" value="PA14"/>
    <property type="match status" value="1"/>
</dbReference>
<dbReference type="SMART" id="SM00758">
    <property type="entry name" value="PA14"/>
    <property type="match status" value="1"/>
</dbReference>
<dbReference type="PROSITE" id="PS51820">
    <property type="entry name" value="PA14"/>
    <property type="match status" value="1"/>
</dbReference>
<evidence type="ECO:0000255" key="1"/>
<evidence type="ECO:0000255" key="2">
    <source>
        <dbReference type="PROSITE-ProRule" id="PRU01164"/>
    </source>
</evidence>
<evidence type="ECO:0000305" key="3"/>
<gene>
    <name type="primary">psiR</name>
    <name type="ORF">DDB_G0293286</name>
</gene>
<reference key="1">
    <citation type="journal article" date="2005" name="Nature">
        <title>The genome of the social amoeba Dictyostelium discoideum.</title>
        <authorList>
            <person name="Eichinger L."/>
            <person name="Pachebat J.A."/>
            <person name="Gloeckner G."/>
            <person name="Rajandream M.A."/>
            <person name="Sucgang R."/>
            <person name="Berriman M."/>
            <person name="Song J."/>
            <person name="Olsen R."/>
            <person name="Szafranski K."/>
            <person name="Xu Q."/>
            <person name="Tunggal B."/>
            <person name="Kummerfeld S."/>
            <person name="Madera M."/>
            <person name="Konfortov B.A."/>
            <person name="Rivero F."/>
            <person name="Bankier A.T."/>
            <person name="Lehmann R."/>
            <person name="Hamlin N."/>
            <person name="Davies R."/>
            <person name="Gaudet P."/>
            <person name="Fey P."/>
            <person name="Pilcher K."/>
            <person name="Chen G."/>
            <person name="Saunders D."/>
            <person name="Sodergren E.J."/>
            <person name="Davis P."/>
            <person name="Kerhornou A."/>
            <person name="Nie X."/>
            <person name="Hall N."/>
            <person name="Anjard C."/>
            <person name="Hemphill L."/>
            <person name="Bason N."/>
            <person name="Farbrother P."/>
            <person name="Desany B."/>
            <person name="Just E."/>
            <person name="Morio T."/>
            <person name="Rost R."/>
            <person name="Churcher C.M."/>
            <person name="Cooper J."/>
            <person name="Haydock S."/>
            <person name="van Driessche N."/>
            <person name="Cronin A."/>
            <person name="Goodhead I."/>
            <person name="Muzny D.M."/>
            <person name="Mourier T."/>
            <person name="Pain A."/>
            <person name="Lu M."/>
            <person name="Harper D."/>
            <person name="Lindsay R."/>
            <person name="Hauser H."/>
            <person name="James K.D."/>
            <person name="Quiles M."/>
            <person name="Madan Babu M."/>
            <person name="Saito T."/>
            <person name="Buchrieser C."/>
            <person name="Wardroper A."/>
            <person name="Felder M."/>
            <person name="Thangavelu M."/>
            <person name="Johnson D."/>
            <person name="Knights A."/>
            <person name="Loulseged H."/>
            <person name="Mungall K.L."/>
            <person name="Oliver K."/>
            <person name="Price C."/>
            <person name="Quail M.A."/>
            <person name="Urushihara H."/>
            <person name="Hernandez J."/>
            <person name="Rabbinowitsch E."/>
            <person name="Steffen D."/>
            <person name="Sanders M."/>
            <person name="Ma J."/>
            <person name="Kohara Y."/>
            <person name="Sharp S."/>
            <person name="Simmonds M.N."/>
            <person name="Spiegler S."/>
            <person name="Tivey A."/>
            <person name="Sugano S."/>
            <person name="White B."/>
            <person name="Walker D."/>
            <person name="Woodward J.R."/>
            <person name="Winckler T."/>
            <person name="Tanaka Y."/>
            <person name="Shaulsky G."/>
            <person name="Schleicher M."/>
            <person name="Weinstock G.M."/>
            <person name="Rosenthal A."/>
            <person name="Cox E.C."/>
            <person name="Chisholm R.L."/>
            <person name="Gibbs R.A."/>
            <person name="Loomis W.F."/>
            <person name="Platzer M."/>
            <person name="Kay R.R."/>
            <person name="Williams J.G."/>
            <person name="Dear P.H."/>
            <person name="Noegel A.A."/>
            <person name="Barrell B.G."/>
            <person name="Kuspa A."/>
        </authorList>
    </citation>
    <scope>NUCLEOTIDE SEQUENCE [LARGE SCALE GENOMIC DNA]</scope>
    <source>
        <strain>AX4</strain>
    </source>
</reference>
<name>PSIR_DICDI</name>
<organism>
    <name type="scientific">Dictyostelium discoideum</name>
    <name type="common">Social amoeba</name>
    <dbReference type="NCBI Taxonomy" id="44689"/>
    <lineage>
        <taxon>Eukaryota</taxon>
        <taxon>Amoebozoa</taxon>
        <taxon>Evosea</taxon>
        <taxon>Eumycetozoa</taxon>
        <taxon>Dictyostelia</taxon>
        <taxon>Dictyosteliales</taxon>
        <taxon>Dictyosteliaceae</taxon>
        <taxon>Dictyostelium</taxon>
    </lineage>
</organism>
<feature type="signal peptide" evidence="1">
    <location>
        <begin position="1"/>
        <end position="21"/>
    </location>
</feature>
<feature type="chain" id="PRO_0000327554" description="Protein psiR">
    <location>
        <begin position="22"/>
        <end position="996"/>
    </location>
</feature>
<feature type="domain" description="PA14" evidence="2">
    <location>
        <begin position="105"/>
        <end position="250"/>
    </location>
</feature>
<feature type="glycosylation site" description="N-linked (GlcNAc...) asparagine" evidence="1">
    <location>
        <position position="79"/>
    </location>
</feature>
<feature type="glycosylation site" description="N-linked (GlcNAc...) asparagine" evidence="1">
    <location>
        <position position="117"/>
    </location>
</feature>
<feature type="glycosylation site" description="N-linked (GlcNAc...) asparagine" evidence="1">
    <location>
        <position position="323"/>
    </location>
</feature>
<feature type="glycosylation site" description="N-linked (GlcNAc...) asparagine" evidence="1">
    <location>
        <position position="396"/>
    </location>
</feature>
<feature type="glycosylation site" description="N-linked (GlcNAc...) asparagine" evidence="1">
    <location>
        <position position="428"/>
    </location>
</feature>
<feature type="glycosylation site" description="N-linked (GlcNAc...) asparagine" evidence="1">
    <location>
        <position position="474"/>
    </location>
</feature>
<feature type="glycosylation site" description="N-linked (GlcNAc...) asparagine" evidence="1">
    <location>
        <position position="500"/>
    </location>
</feature>
<feature type="glycosylation site" description="N-linked (GlcNAc...) asparagine" evidence="1">
    <location>
        <position position="645"/>
    </location>
</feature>
<feature type="glycosylation site" description="N-linked (GlcNAc...) asparagine" evidence="1">
    <location>
        <position position="779"/>
    </location>
</feature>
<protein>
    <recommendedName>
        <fullName>Protein psiR</fullName>
    </recommendedName>
</protein>
<proteinExistence type="inferred from homology"/>